<comment type="function">
    <text evidence="1">Carrier of the growing fatty acid chain in fatty acid biosynthesis.</text>
</comment>
<comment type="pathway">
    <text evidence="1">Lipid metabolism; fatty acid biosynthesis.</text>
</comment>
<comment type="subcellular location">
    <subcellularLocation>
        <location evidence="1">Cytoplasm</location>
    </subcellularLocation>
</comment>
<comment type="PTM">
    <text evidence="1">4'-phosphopantetheine is transferred from CoA to a specific serine of apo-ACP by AcpS. This modification is essential for activity because fatty acids are bound in thioester linkage to the sulfhydryl of the prosthetic group.</text>
</comment>
<comment type="similarity">
    <text evidence="1">Belongs to the acyl carrier protein (ACP) family.</text>
</comment>
<sequence>MALFEDIQAVIAEQLNVDAAQVTPEAEFVKDLGADSLDVVELIMALEEKFGVEIPDEQAEKIVNVGDVVKYIEDNKLA</sequence>
<gene>
    <name evidence="1" type="primary">acpP</name>
    <name type="ordered locus">HPAG1_0538</name>
</gene>
<name>ACP_HELPH</name>
<evidence type="ECO:0000255" key="1">
    <source>
        <dbReference type="HAMAP-Rule" id="MF_01217"/>
    </source>
</evidence>
<evidence type="ECO:0000255" key="2">
    <source>
        <dbReference type="PROSITE-ProRule" id="PRU00258"/>
    </source>
</evidence>
<keyword id="KW-0963">Cytoplasm</keyword>
<keyword id="KW-0275">Fatty acid biosynthesis</keyword>
<keyword id="KW-0276">Fatty acid metabolism</keyword>
<keyword id="KW-0444">Lipid biosynthesis</keyword>
<keyword id="KW-0443">Lipid metabolism</keyword>
<keyword id="KW-0596">Phosphopantetheine</keyword>
<keyword id="KW-0597">Phosphoprotein</keyword>
<protein>
    <recommendedName>
        <fullName evidence="1">Acyl carrier protein</fullName>
        <shortName evidence="1">ACP</shortName>
    </recommendedName>
</protein>
<proteinExistence type="inferred from homology"/>
<organism>
    <name type="scientific">Helicobacter pylori (strain HPAG1)</name>
    <dbReference type="NCBI Taxonomy" id="357544"/>
    <lineage>
        <taxon>Bacteria</taxon>
        <taxon>Pseudomonadati</taxon>
        <taxon>Campylobacterota</taxon>
        <taxon>Epsilonproteobacteria</taxon>
        <taxon>Campylobacterales</taxon>
        <taxon>Helicobacteraceae</taxon>
        <taxon>Helicobacter</taxon>
    </lineage>
</organism>
<dbReference type="EMBL" id="CP000241">
    <property type="protein sequence ID" value="ABF84605.1"/>
    <property type="molecule type" value="Genomic_DNA"/>
</dbReference>
<dbReference type="RefSeq" id="WP_001163094.1">
    <property type="nucleotide sequence ID" value="NC_008086.1"/>
</dbReference>
<dbReference type="SMR" id="Q1CTW7"/>
<dbReference type="KEGG" id="hpa:HPAG1_0538"/>
<dbReference type="HOGENOM" id="CLU_108696_5_1_7"/>
<dbReference type="UniPathway" id="UPA00094"/>
<dbReference type="GO" id="GO:0005829">
    <property type="term" value="C:cytosol"/>
    <property type="evidence" value="ECO:0007669"/>
    <property type="project" value="TreeGrafter"/>
</dbReference>
<dbReference type="GO" id="GO:0016020">
    <property type="term" value="C:membrane"/>
    <property type="evidence" value="ECO:0007669"/>
    <property type="project" value="GOC"/>
</dbReference>
<dbReference type="GO" id="GO:0000035">
    <property type="term" value="F:acyl binding"/>
    <property type="evidence" value="ECO:0007669"/>
    <property type="project" value="TreeGrafter"/>
</dbReference>
<dbReference type="GO" id="GO:0000036">
    <property type="term" value="F:acyl carrier activity"/>
    <property type="evidence" value="ECO:0007669"/>
    <property type="project" value="UniProtKB-UniRule"/>
</dbReference>
<dbReference type="GO" id="GO:0031177">
    <property type="term" value="F:phosphopantetheine binding"/>
    <property type="evidence" value="ECO:0007669"/>
    <property type="project" value="InterPro"/>
</dbReference>
<dbReference type="GO" id="GO:0009245">
    <property type="term" value="P:lipid A biosynthetic process"/>
    <property type="evidence" value="ECO:0007669"/>
    <property type="project" value="TreeGrafter"/>
</dbReference>
<dbReference type="FunFam" id="1.10.1200.10:FF:000006">
    <property type="entry name" value="Acyl carrier protein"/>
    <property type="match status" value="1"/>
</dbReference>
<dbReference type="Gene3D" id="1.10.1200.10">
    <property type="entry name" value="ACP-like"/>
    <property type="match status" value="1"/>
</dbReference>
<dbReference type="HAMAP" id="MF_01217">
    <property type="entry name" value="Acyl_carrier"/>
    <property type="match status" value="1"/>
</dbReference>
<dbReference type="InterPro" id="IPR003231">
    <property type="entry name" value="ACP"/>
</dbReference>
<dbReference type="InterPro" id="IPR036736">
    <property type="entry name" value="ACP-like_sf"/>
</dbReference>
<dbReference type="InterPro" id="IPR020806">
    <property type="entry name" value="PKS_PP-bd"/>
</dbReference>
<dbReference type="InterPro" id="IPR009081">
    <property type="entry name" value="PP-bd_ACP"/>
</dbReference>
<dbReference type="InterPro" id="IPR006162">
    <property type="entry name" value="Ppantetheine_attach_site"/>
</dbReference>
<dbReference type="NCBIfam" id="TIGR00517">
    <property type="entry name" value="acyl_carrier"/>
    <property type="match status" value="1"/>
</dbReference>
<dbReference type="NCBIfam" id="NF002148">
    <property type="entry name" value="PRK00982.1-2"/>
    <property type="match status" value="1"/>
</dbReference>
<dbReference type="NCBIfam" id="NF002150">
    <property type="entry name" value="PRK00982.1-4"/>
    <property type="match status" value="1"/>
</dbReference>
<dbReference type="NCBIfam" id="NF002151">
    <property type="entry name" value="PRK00982.1-5"/>
    <property type="match status" value="1"/>
</dbReference>
<dbReference type="PANTHER" id="PTHR20863">
    <property type="entry name" value="ACYL CARRIER PROTEIN"/>
    <property type="match status" value="1"/>
</dbReference>
<dbReference type="PANTHER" id="PTHR20863:SF76">
    <property type="entry name" value="CARRIER DOMAIN-CONTAINING PROTEIN"/>
    <property type="match status" value="1"/>
</dbReference>
<dbReference type="Pfam" id="PF00550">
    <property type="entry name" value="PP-binding"/>
    <property type="match status" value="1"/>
</dbReference>
<dbReference type="SMART" id="SM00823">
    <property type="entry name" value="PKS_PP"/>
    <property type="match status" value="1"/>
</dbReference>
<dbReference type="SUPFAM" id="SSF47336">
    <property type="entry name" value="ACP-like"/>
    <property type="match status" value="1"/>
</dbReference>
<dbReference type="PROSITE" id="PS50075">
    <property type="entry name" value="CARRIER"/>
    <property type="match status" value="1"/>
</dbReference>
<dbReference type="PROSITE" id="PS00012">
    <property type="entry name" value="PHOSPHOPANTETHEINE"/>
    <property type="match status" value="1"/>
</dbReference>
<accession>Q1CTW7</accession>
<feature type="chain" id="PRO_1000066623" description="Acyl carrier protein">
    <location>
        <begin position="1"/>
        <end position="78"/>
    </location>
</feature>
<feature type="domain" description="Carrier" evidence="2">
    <location>
        <begin position="1"/>
        <end position="76"/>
    </location>
</feature>
<feature type="modified residue" description="O-(pantetheine 4'-phosphoryl)serine" evidence="2">
    <location>
        <position position="36"/>
    </location>
</feature>
<reference key="1">
    <citation type="journal article" date="2006" name="Proc. Natl. Acad. Sci. U.S.A.">
        <title>The complete genome sequence of a chronic atrophic gastritis Helicobacter pylori strain: evolution during disease progression.</title>
        <authorList>
            <person name="Oh J.D."/>
            <person name="Kling-Baeckhed H."/>
            <person name="Giannakis M."/>
            <person name="Xu J."/>
            <person name="Fulton R.S."/>
            <person name="Fulton L.A."/>
            <person name="Cordum H.S."/>
            <person name="Wang C."/>
            <person name="Elliott G."/>
            <person name="Edwards J."/>
            <person name="Mardis E.R."/>
            <person name="Engstrand L.G."/>
            <person name="Gordon J.I."/>
        </authorList>
    </citation>
    <scope>NUCLEOTIDE SEQUENCE [LARGE SCALE GENOMIC DNA]</scope>
    <source>
        <strain>HPAG1</strain>
    </source>
</reference>